<comment type="function">
    <text evidence="1">Component of the eukaryotic translation initiation factor 3 (eIF-3) complex, which is involved in protein synthesis of a specialized repertoire of mRNAs and, together with other initiation factors, stimulates binding of mRNA and methionyl-tRNAi to the 40S ribosome. The eIF-3 complex specifically targets and initiates translation of a subset of mRNAs involved in cell proliferation.</text>
</comment>
<comment type="subunit">
    <text evidence="1">Component of the eukaryotic translation initiation factor 3 (eIF-3) complex. The eIF-3 complex interacts with pix.</text>
</comment>
<comment type="subcellular location">
    <subcellularLocation>
        <location evidence="1">Cytoplasm</location>
    </subcellularLocation>
</comment>
<comment type="similarity">
    <text evidence="1">Belongs to the eIF-3 subunit F family.</text>
</comment>
<sequence length="285" mass="32619">MSRNLSMRAKVFLKPLVLFQIIDAYDRRPKGDNQVMGTLLGRNKEDHIEITNCFTVPHKEHSENKRIDLDMTYASEVLELNMFAYPNERVLGWFCTGKSVSRSASLIHDYYVRECGERQPLHLLVDASLKNQRLSTRLYCAVEMGVPGGTKGLMFSLVPLEISSENSDLLAMRCIEKQSQQQASKQMERFAPELVQVVDATRDIQQRLDLLLRYINDVLARKKKPDNVVGRSLQAALTAVPLLDSEKFRLMFNTNLRDMLMAITLSTMIKTQLEISEKLSCMQDQ</sequence>
<evidence type="ECO:0000255" key="1">
    <source>
        <dbReference type="HAMAP-Rule" id="MF_03005"/>
    </source>
</evidence>
<evidence type="ECO:0000255" key="2">
    <source>
        <dbReference type="PROSITE-ProRule" id="PRU01182"/>
    </source>
</evidence>
<name>EI3F2_DROSI</name>
<accession>B4QD77</accession>
<keyword id="KW-0963">Cytoplasm</keyword>
<keyword id="KW-0396">Initiation factor</keyword>
<keyword id="KW-0648">Protein biosynthesis</keyword>
<keyword id="KW-1185">Reference proteome</keyword>
<dbReference type="EMBL" id="CM000362">
    <property type="protein sequence ID" value="EDX05864.1"/>
    <property type="molecule type" value="Genomic_DNA"/>
</dbReference>
<dbReference type="SMR" id="B4QD77"/>
<dbReference type="STRING" id="7240.B4QD77"/>
<dbReference type="EnsemblMetazoa" id="FBtr0210310">
    <property type="protein sequence ID" value="FBpp0208802"/>
    <property type="gene ID" value="FBgn0182171"/>
</dbReference>
<dbReference type="EnsemblMetazoa" id="XM_002080243.4">
    <property type="protein sequence ID" value="XP_002080279.2"/>
    <property type="gene ID" value="LOC6733216"/>
</dbReference>
<dbReference type="HOGENOM" id="CLU_027018_0_2_1"/>
<dbReference type="OMA" id="IEITNCF"/>
<dbReference type="OrthoDB" id="25498at2759"/>
<dbReference type="PhylomeDB" id="B4QD77"/>
<dbReference type="Proteomes" id="UP000000304">
    <property type="component" value="Chromosome 2R"/>
</dbReference>
<dbReference type="Bgee" id="FBgn0182171">
    <property type="expression patterns" value="Expressed in male reproductive system and 3 other cell types or tissues"/>
</dbReference>
<dbReference type="GO" id="GO:0016282">
    <property type="term" value="C:eukaryotic 43S preinitiation complex"/>
    <property type="evidence" value="ECO:0007669"/>
    <property type="project" value="UniProtKB-UniRule"/>
</dbReference>
<dbReference type="GO" id="GO:0033290">
    <property type="term" value="C:eukaryotic 48S preinitiation complex"/>
    <property type="evidence" value="ECO:0007669"/>
    <property type="project" value="UniProtKB-UniRule"/>
</dbReference>
<dbReference type="GO" id="GO:0071541">
    <property type="term" value="C:eukaryotic translation initiation factor 3 complex, eIF3m"/>
    <property type="evidence" value="ECO:0007669"/>
    <property type="project" value="TreeGrafter"/>
</dbReference>
<dbReference type="GO" id="GO:0008237">
    <property type="term" value="F:metallopeptidase activity"/>
    <property type="evidence" value="ECO:0007669"/>
    <property type="project" value="InterPro"/>
</dbReference>
<dbReference type="GO" id="GO:0003743">
    <property type="term" value="F:translation initiation factor activity"/>
    <property type="evidence" value="ECO:0007669"/>
    <property type="project" value="UniProtKB-UniRule"/>
</dbReference>
<dbReference type="GO" id="GO:0031369">
    <property type="term" value="F:translation initiation factor binding"/>
    <property type="evidence" value="ECO:0007669"/>
    <property type="project" value="InterPro"/>
</dbReference>
<dbReference type="GO" id="GO:0001732">
    <property type="term" value="P:formation of cytoplasmic translation initiation complex"/>
    <property type="evidence" value="ECO:0007669"/>
    <property type="project" value="UniProtKB-UniRule"/>
</dbReference>
<dbReference type="CDD" id="cd08064">
    <property type="entry name" value="MPN_eIF3f"/>
    <property type="match status" value="1"/>
</dbReference>
<dbReference type="FunFam" id="3.40.140.10:FF:000127">
    <property type="entry name" value="Eukaryotic translation initiation factor 3 subunit F-2"/>
    <property type="match status" value="1"/>
</dbReference>
<dbReference type="Gene3D" id="3.40.140.10">
    <property type="entry name" value="Cytidine Deaminase, domain 2"/>
    <property type="match status" value="1"/>
</dbReference>
<dbReference type="HAMAP" id="MF_03005">
    <property type="entry name" value="eIF3f"/>
    <property type="match status" value="1"/>
</dbReference>
<dbReference type="InterPro" id="IPR027531">
    <property type="entry name" value="eIF3f"/>
</dbReference>
<dbReference type="InterPro" id="IPR024969">
    <property type="entry name" value="EIF3F/CSN6-like_C"/>
</dbReference>
<dbReference type="InterPro" id="IPR000555">
    <property type="entry name" value="JAMM/MPN+_dom"/>
</dbReference>
<dbReference type="InterPro" id="IPR037518">
    <property type="entry name" value="MPN"/>
</dbReference>
<dbReference type="PANTHER" id="PTHR10540:SF6">
    <property type="entry name" value="EUKARYOTIC TRANSLATION INITIATION FACTOR 3 SUBUNIT F"/>
    <property type="match status" value="1"/>
</dbReference>
<dbReference type="PANTHER" id="PTHR10540">
    <property type="entry name" value="EUKARYOTIC TRANSLATION INITIATION FACTOR 3 SUBUNIT F-RELATED"/>
    <property type="match status" value="1"/>
</dbReference>
<dbReference type="Pfam" id="PF01398">
    <property type="entry name" value="JAB"/>
    <property type="match status" value="1"/>
</dbReference>
<dbReference type="Pfam" id="PF13012">
    <property type="entry name" value="MitMem_reg"/>
    <property type="match status" value="1"/>
</dbReference>
<dbReference type="SMART" id="SM00232">
    <property type="entry name" value="JAB_MPN"/>
    <property type="match status" value="1"/>
</dbReference>
<dbReference type="PROSITE" id="PS50249">
    <property type="entry name" value="MPN"/>
    <property type="match status" value="1"/>
</dbReference>
<proteinExistence type="inferred from homology"/>
<reference key="1">
    <citation type="journal article" date="2007" name="Nature">
        <title>Evolution of genes and genomes on the Drosophila phylogeny.</title>
        <authorList>
            <consortium name="Drosophila 12 genomes consortium"/>
        </authorList>
    </citation>
    <scope>NUCLEOTIDE SEQUENCE [LARGE SCALE GENOMIC DNA]</scope>
</reference>
<protein>
    <recommendedName>
        <fullName evidence="1">Eukaryotic translation initiation factor 3 subunit F-2</fullName>
        <shortName evidence="1">eIF3f-2</shortName>
    </recommendedName>
    <alternativeName>
        <fullName evidence="1">Eukaryotic translation initiation factor 3 subunit 5-2</fullName>
    </alternativeName>
</protein>
<gene>
    <name evidence="1" type="primary">eIF3f2</name>
    <name evidence="1" type="synonym">eIF3-S5-2</name>
    <name type="ORF">GD10400</name>
</gene>
<organism>
    <name type="scientific">Drosophila simulans</name>
    <name type="common">Fruit fly</name>
    <dbReference type="NCBI Taxonomy" id="7240"/>
    <lineage>
        <taxon>Eukaryota</taxon>
        <taxon>Metazoa</taxon>
        <taxon>Ecdysozoa</taxon>
        <taxon>Arthropoda</taxon>
        <taxon>Hexapoda</taxon>
        <taxon>Insecta</taxon>
        <taxon>Pterygota</taxon>
        <taxon>Neoptera</taxon>
        <taxon>Endopterygota</taxon>
        <taxon>Diptera</taxon>
        <taxon>Brachycera</taxon>
        <taxon>Muscomorpha</taxon>
        <taxon>Ephydroidea</taxon>
        <taxon>Drosophilidae</taxon>
        <taxon>Drosophila</taxon>
        <taxon>Sophophora</taxon>
    </lineage>
</organism>
<feature type="chain" id="PRO_0000364314" description="Eukaryotic translation initiation factor 3 subunit F-2">
    <location>
        <begin position="1"/>
        <end position="285"/>
    </location>
</feature>
<feature type="domain" description="MPN" evidence="2">
    <location>
        <begin position="11"/>
        <end position="145"/>
    </location>
</feature>